<reference key="1">
    <citation type="journal article" date="2004" name="Nature">
        <title>The DNA sequence and comparative analysis of human chromosome 5.</title>
        <authorList>
            <person name="Schmutz J."/>
            <person name="Martin J."/>
            <person name="Terry A."/>
            <person name="Couronne O."/>
            <person name="Grimwood J."/>
            <person name="Lowry S."/>
            <person name="Gordon L.A."/>
            <person name="Scott D."/>
            <person name="Xie G."/>
            <person name="Huang W."/>
            <person name="Hellsten U."/>
            <person name="Tran-Gyamfi M."/>
            <person name="She X."/>
            <person name="Prabhakar S."/>
            <person name="Aerts A."/>
            <person name="Altherr M."/>
            <person name="Bajorek E."/>
            <person name="Black S."/>
            <person name="Branscomb E."/>
            <person name="Caoile C."/>
            <person name="Challacombe J.F."/>
            <person name="Chan Y.M."/>
            <person name="Denys M."/>
            <person name="Detter J.C."/>
            <person name="Escobar J."/>
            <person name="Flowers D."/>
            <person name="Fotopulos D."/>
            <person name="Glavina T."/>
            <person name="Gomez M."/>
            <person name="Gonzales E."/>
            <person name="Goodstein D."/>
            <person name="Grigoriev I."/>
            <person name="Groza M."/>
            <person name="Hammon N."/>
            <person name="Hawkins T."/>
            <person name="Haydu L."/>
            <person name="Israni S."/>
            <person name="Jett J."/>
            <person name="Kadner K."/>
            <person name="Kimball H."/>
            <person name="Kobayashi A."/>
            <person name="Lopez F."/>
            <person name="Lou Y."/>
            <person name="Martinez D."/>
            <person name="Medina C."/>
            <person name="Morgan J."/>
            <person name="Nandkeshwar R."/>
            <person name="Noonan J.P."/>
            <person name="Pitluck S."/>
            <person name="Pollard M."/>
            <person name="Predki P."/>
            <person name="Priest J."/>
            <person name="Ramirez L."/>
            <person name="Retterer J."/>
            <person name="Rodriguez A."/>
            <person name="Rogers S."/>
            <person name="Salamov A."/>
            <person name="Salazar A."/>
            <person name="Thayer N."/>
            <person name="Tice H."/>
            <person name="Tsai M."/>
            <person name="Ustaszewska A."/>
            <person name="Vo N."/>
            <person name="Wheeler J."/>
            <person name="Wu K."/>
            <person name="Yang J."/>
            <person name="Dickson M."/>
            <person name="Cheng J.-F."/>
            <person name="Eichler E.E."/>
            <person name="Olsen A."/>
            <person name="Pennacchio L.A."/>
            <person name="Rokhsar D.S."/>
            <person name="Richardson P."/>
            <person name="Lucas S.M."/>
            <person name="Myers R.M."/>
            <person name="Rubin E.M."/>
        </authorList>
    </citation>
    <scope>NUCLEOTIDE SEQUENCE [LARGE SCALE GENOMIC DNA]</scope>
</reference>
<reference key="2">
    <citation type="submission" date="2005-09" db="EMBL/GenBank/DDBJ databases">
        <authorList>
            <person name="Mural R.J."/>
            <person name="Istrail S."/>
            <person name="Sutton G.G."/>
            <person name="Florea L."/>
            <person name="Halpern A.L."/>
            <person name="Mobarry C.M."/>
            <person name="Lippert R."/>
            <person name="Walenz B."/>
            <person name="Shatkay H."/>
            <person name="Dew I."/>
            <person name="Miller J.R."/>
            <person name="Flanigan M.J."/>
            <person name="Edwards N.J."/>
            <person name="Bolanos R."/>
            <person name="Fasulo D."/>
            <person name="Halldorsson B.V."/>
            <person name="Hannenhalli S."/>
            <person name="Turner R."/>
            <person name="Yooseph S."/>
            <person name="Lu F."/>
            <person name="Nusskern D.R."/>
            <person name="Shue B.C."/>
            <person name="Zheng X.H."/>
            <person name="Zhong F."/>
            <person name="Delcher A.L."/>
            <person name="Huson D.H."/>
            <person name="Kravitz S.A."/>
            <person name="Mouchard L."/>
            <person name="Reinert K."/>
            <person name="Remington K.A."/>
            <person name="Clark A.G."/>
            <person name="Waterman M.S."/>
            <person name="Eichler E.E."/>
            <person name="Adams M.D."/>
            <person name="Hunkapiller M.W."/>
            <person name="Myers E.W."/>
            <person name="Venter J.C."/>
        </authorList>
    </citation>
    <scope>NUCLEOTIDE SEQUENCE [LARGE SCALE GENOMIC DNA]</scope>
</reference>
<reference key="3">
    <citation type="journal article" date="2004" name="Genome Res.">
        <title>The status, quality, and expansion of the NIH full-length cDNA project: the Mammalian Gene Collection (MGC).</title>
        <authorList>
            <consortium name="The MGC Project Team"/>
        </authorList>
    </citation>
    <scope>NUCLEOTIDE SEQUENCE [LARGE SCALE MRNA]</scope>
    <source>
        <tissue>Ovary</tissue>
        <tissue>Prostate</tissue>
    </source>
</reference>
<reference key="4">
    <citation type="journal article" date="2004" name="Nat. Genet.">
        <title>Complete sequencing and characterization of 21,243 full-length human cDNAs.</title>
        <authorList>
            <person name="Ota T."/>
            <person name="Suzuki Y."/>
            <person name="Nishikawa T."/>
            <person name="Otsuki T."/>
            <person name="Sugiyama T."/>
            <person name="Irie R."/>
            <person name="Wakamatsu A."/>
            <person name="Hayashi K."/>
            <person name="Sato H."/>
            <person name="Nagai K."/>
            <person name="Kimura K."/>
            <person name="Makita H."/>
            <person name="Sekine M."/>
            <person name="Obayashi M."/>
            <person name="Nishi T."/>
            <person name="Shibahara T."/>
            <person name="Tanaka T."/>
            <person name="Ishii S."/>
            <person name="Yamamoto J."/>
            <person name="Saito K."/>
            <person name="Kawai Y."/>
            <person name="Isono Y."/>
            <person name="Nakamura Y."/>
            <person name="Nagahari K."/>
            <person name="Murakami K."/>
            <person name="Yasuda T."/>
            <person name="Iwayanagi T."/>
            <person name="Wagatsuma M."/>
            <person name="Shiratori A."/>
            <person name="Sudo H."/>
            <person name="Hosoiri T."/>
            <person name="Kaku Y."/>
            <person name="Kodaira H."/>
            <person name="Kondo H."/>
            <person name="Sugawara M."/>
            <person name="Takahashi M."/>
            <person name="Kanda K."/>
            <person name="Yokoi T."/>
            <person name="Furuya T."/>
            <person name="Kikkawa E."/>
            <person name="Omura Y."/>
            <person name="Abe K."/>
            <person name="Kamihara K."/>
            <person name="Katsuta N."/>
            <person name="Sato K."/>
            <person name="Tanikawa M."/>
            <person name="Yamazaki M."/>
            <person name="Ninomiya K."/>
            <person name="Ishibashi T."/>
            <person name="Yamashita H."/>
            <person name="Murakawa K."/>
            <person name="Fujimori K."/>
            <person name="Tanai H."/>
            <person name="Kimata M."/>
            <person name="Watanabe M."/>
            <person name="Hiraoka S."/>
            <person name="Chiba Y."/>
            <person name="Ishida S."/>
            <person name="Ono Y."/>
            <person name="Takiguchi S."/>
            <person name="Watanabe S."/>
            <person name="Yosida M."/>
            <person name="Hotuta T."/>
            <person name="Kusano J."/>
            <person name="Kanehori K."/>
            <person name="Takahashi-Fujii A."/>
            <person name="Hara H."/>
            <person name="Tanase T.-O."/>
            <person name="Nomura Y."/>
            <person name="Togiya S."/>
            <person name="Komai F."/>
            <person name="Hara R."/>
            <person name="Takeuchi K."/>
            <person name="Arita M."/>
            <person name="Imose N."/>
            <person name="Musashino K."/>
            <person name="Yuuki H."/>
            <person name="Oshima A."/>
            <person name="Sasaki N."/>
            <person name="Aotsuka S."/>
            <person name="Yoshikawa Y."/>
            <person name="Matsunawa H."/>
            <person name="Ichihara T."/>
            <person name="Shiohata N."/>
            <person name="Sano S."/>
            <person name="Moriya S."/>
            <person name="Momiyama H."/>
            <person name="Satoh N."/>
            <person name="Takami S."/>
            <person name="Terashima Y."/>
            <person name="Suzuki O."/>
            <person name="Nakagawa S."/>
            <person name="Senoh A."/>
            <person name="Mizoguchi H."/>
            <person name="Goto Y."/>
            <person name="Shimizu F."/>
            <person name="Wakebe H."/>
            <person name="Hishigaki H."/>
            <person name="Watanabe T."/>
            <person name="Sugiyama A."/>
            <person name="Takemoto M."/>
            <person name="Kawakami B."/>
            <person name="Yamazaki M."/>
            <person name="Watanabe K."/>
            <person name="Kumagai A."/>
            <person name="Itakura S."/>
            <person name="Fukuzumi Y."/>
            <person name="Fujimori Y."/>
            <person name="Komiyama M."/>
            <person name="Tashiro H."/>
            <person name="Tanigami A."/>
            <person name="Fujiwara T."/>
            <person name="Ono T."/>
            <person name="Yamada K."/>
            <person name="Fujii Y."/>
            <person name="Ozaki K."/>
            <person name="Hirao M."/>
            <person name="Ohmori Y."/>
            <person name="Kawabata A."/>
            <person name="Hikiji T."/>
            <person name="Kobatake N."/>
            <person name="Inagaki H."/>
            <person name="Ikema Y."/>
            <person name="Okamoto S."/>
            <person name="Okitani R."/>
            <person name="Kawakami T."/>
            <person name="Noguchi S."/>
            <person name="Itoh T."/>
            <person name="Shigeta K."/>
            <person name="Senba T."/>
            <person name="Matsumura K."/>
            <person name="Nakajima Y."/>
            <person name="Mizuno T."/>
            <person name="Morinaga M."/>
            <person name="Sasaki M."/>
            <person name="Togashi T."/>
            <person name="Oyama M."/>
            <person name="Hata H."/>
            <person name="Watanabe M."/>
            <person name="Komatsu T."/>
            <person name="Mizushima-Sugano J."/>
            <person name="Satoh T."/>
            <person name="Shirai Y."/>
            <person name="Takahashi Y."/>
            <person name="Nakagawa K."/>
            <person name="Okumura K."/>
            <person name="Nagase T."/>
            <person name="Nomura N."/>
            <person name="Kikuchi H."/>
            <person name="Masuho Y."/>
            <person name="Yamashita R."/>
            <person name="Nakai K."/>
            <person name="Yada T."/>
            <person name="Nakamura Y."/>
            <person name="Ohara O."/>
            <person name="Isogai T."/>
            <person name="Sugano S."/>
        </authorList>
    </citation>
    <scope>NUCLEOTIDE SEQUENCE [LARGE SCALE MRNA] OF 123-298</scope>
</reference>
<reference key="5">
    <citation type="journal article" date="2011" name="BMC Syst. Biol.">
        <title>Initial characterization of the human central proteome.</title>
        <authorList>
            <person name="Burkard T.R."/>
            <person name="Planyavsky M."/>
            <person name="Kaupe I."/>
            <person name="Breitwieser F.P."/>
            <person name="Buerckstuemmer T."/>
            <person name="Bennett K.L."/>
            <person name="Superti-Furga G."/>
            <person name="Colinge J."/>
        </authorList>
    </citation>
    <scope>IDENTIFICATION BY MASS SPECTROMETRY [LARGE SCALE ANALYSIS]</scope>
</reference>
<reference key="6">
    <citation type="journal article" date="2013" name="Cell">
        <title>OTU deubiquitinases reveal mechanisms of linkage specificity and enable ubiquitin chain restriction analysis.</title>
        <authorList>
            <person name="Mevissen T.E."/>
            <person name="Hospenthal M.K."/>
            <person name="Geurink P.P."/>
            <person name="Elliott P.R."/>
            <person name="Akutsu M."/>
            <person name="Arnaudo N."/>
            <person name="Ekkebus R."/>
            <person name="Kulathu Y."/>
            <person name="Wauer T."/>
            <person name="El Oualid F."/>
            <person name="Freund S.M."/>
            <person name="Ovaa H."/>
            <person name="Komander D."/>
        </authorList>
    </citation>
    <scope>FUNCTION</scope>
    <scope>CATALYTIC ACTIVITY</scope>
</reference>
<reference key="7">
    <citation type="journal article" date="2013" name="Mol. Cell">
        <title>OTULIN restricts Met1-linked ubiquitination to control innate immune signaling.</title>
        <authorList>
            <person name="Fiil B.K."/>
            <person name="Damgaard R.B."/>
            <person name="Wagner S.A."/>
            <person name="Keusekotten K."/>
            <person name="Fritsch M."/>
            <person name="Bekker-Jensen S."/>
            <person name="Mailand N."/>
            <person name="Choudhary C."/>
            <person name="Komander D."/>
            <person name="Gyrd-Hansen M."/>
        </authorList>
    </citation>
    <scope>FUNCTION</scope>
    <scope>MUTAGENESIS OF TRP-96 AND CYS-129</scope>
</reference>
<reference key="8">
    <citation type="journal article" date="2015" name="Cell Rep.">
        <title>LUBAC-recruited CYLD and A20 regulate gene activation and cell death by exerting opposing effects on linear ubiquitin in signaling complexes.</title>
        <authorList>
            <person name="Draber P."/>
            <person name="Kupka S."/>
            <person name="Reichert M."/>
            <person name="Draberova H."/>
            <person name="Lafont E."/>
            <person name="de Miguel D."/>
            <person name="Spilgies L."/>
            <person name="Surinova S."/>
            <person name="Taraborrelli L."/>
            <person name="Hartwig T."/>
            <person name="Rieser E."/>
            <person name="Martino L."/>
            <person name="Rittinger K."/>
            <person name="Walczak H."/>
        </authorList>
    </citation>
    <scope>FUNCTION</scope>
</reference>
<reference key="9">
    <citation type="journal article" date="2016" name="Cell Rep.">
        <title>CYLD limits Lys63- and Met1-linked ubiquitin at receptor complexes to regulate innate immune signaling.</title>
        <authorList>
            <person name="Hrdinka M."/>
            <person name="Fiil B.K."/>
            <person name="Zucca M."/>
            <person name="Leske D."/>
            <person name="Bagola K."/>
            <person name="Yabal M."/>
            <person name="Elliott P.R."/>
            <person name="Damgaard R.B."/>
            <person name="Komander D."/>
            <person name="Jost P.J."/>
            <person name="Gyrd-Hansen M."/>
        </authorList>
    </citation>
    <scope>FUNCTION</scope>
</reference>
<reference key="10">
    <citation type="journal article" date="2016" name="Cell">
        <title>The deubiquitinase OTULIN is an essential negative regulator of inflammation and autoimmunity.</title>
        <authorList>
            <person name="Damgaard R.B."/>
            <person name="Walker J.A."/>
            <person name="Marco-Casanova P."/>
            <person name="Morgan N.V."/>
            <person name="Titheradge H.L."/>
            <person name="Elliott P.R."/>
            <person name="McHale D."/>
            <person name="Maher E.R."/>
            <person name="McKenzie A.N."/>
            <person name="Komander D."/>
        </authorList>
    </citation>
    <scope>INVOLVEMENT IN AIPDSB</scope>
    <scope>FUNCTION</scope>
    <scope>INTERACTION WITH RNF31</scope>
    <scope>VARIANT AIPDSB PRO-272</scope>
    <scope>CHARACTERIZATION OF VARIANT AIPDSB PRO-272</scope>
</reference>
<reference key="11">
    <citation type="journal article" date="2016" name="EMBO Rep.">
        <title>SPATA2 promotes CYLD activity and regulates TNF-induced NF-kappaB signaling and cell death.</title>
        <authorList>
            <person name="Schlicher L."/>
            <person name="Wissler M."/>
            <person name="Preiss F."/>
            <person name="Brauns-Schubert P."/>
            <person name="Jakob C."/>
            <person name="Dumit V."/>
            <person name="Borner C."/>
            <person name="Dengjel J."/>
            <person name="Maurer U."/>
        </authorList>
    </citation>
    <scope>INTERACTION WITH RNF31</scope>
    <scope>DOMAIN</scope>
    <scope>MUTAGENESIS OF TYR-56</scope>
</reference>
<reference key="12">
    <citation type="journal article" date="2016" name="Proc. Natl. Acad. Sci. U.S.A.">
        <title>Biallelic hypomorphic mutations in a linear deubiquitinase define otulipenia, an early-onset autoinflammatory disease.</title>
        <authorList>
            <person name="Zhou Q."/>
            <person name="Yu X."/>
            <person name="Demirkaya E."/>
            <person name="Deuitch N."/>
            <person name="Stone D."/>
            <person name="Tsai W.L."/>
            <person name="Kuehn H.S."/>
            <person name="Wang H."/>
            <person name="Yang D."/>
            <person name="Park Y.H."/>
            <person name="Ombrello A.K."/>
            <person name="Blake M."/>
            <person name="Romeo T."/>
            <person name="Remmers E.F."/>
            <person name="Chae J.J."/>
            <person name="Mullikin J.C."/>
            <person name="Guezel F."/>
            <person name="Milner J.D."/>
            <person name="Boehm M."/>
            <person name="Rosenzweig S.D."/>
            <person name="Gadina M."/>
            <person name="Welch S.B."/>
            <person name="Oezen S."/>
            <person name="Topaloglu R."/>
            <person name="Abinun M."/>
            <person name="Kastner D.L."/>
            <person name="Aksentijevich I."/>
        </authorList>
    </citation>
    <scope>INVOLVEMENT IN AIPDSB</scope>
    <scope>FUNCTION</scope>
    <scope>VARIANTS AIPDSB CYS-244 AND PRO-272</scope>
    <scope>CHARACTERIZATION OF VARIANTS AIPDSB CYS-244 AND PRO-272</scope>
</reference>
<reference key="13">
    <citation type="journal article" date="2022" name="Science">
        <title>Human OTULIN haploinsufficiency impairs cell-intrinsic immunity to staphylococcal alpha-toxin.</title>
        <authorList>
            <person name="Spaan A.N."/>
            <person name="Neehus A.L."/>
            <person name="Laplantine E."/>
            <person name="Staels F."/>
            <person name="Ogishi M."/>
            <person name="Seeleuthner Y."/>
            <person name="Rapaport F."/>
            <person name="Lacey K.A."/>
            <person name="Van Nieuwenhove E."/>
            <person name="Chrabieh M."/>
            <person name="Hum D."/>
            <person name="Migaud M."/>
            <person name="Izmiryan A."/>
            <person name="Lorenzo L."/>
            <person name="Kochetkov T."/>
            <person name="Heesterbeek D.A.C."/>
            <person name="Bardoel B.W."/>
            <person name="DuMont A.L."/>
            <person name="Dobbs K."/>
            <person name="Chardonnet S."/>
            <person name="Heissel S."/>
            <person name="Baslan T."/>
            <person name="Zhang P."/>
            <person name="Yang R."/>
            <person name="Bogunovic D."/>
            <person name="Wunderink H.F."/>
            <person name="Haas P.A."/>
            <person name="Molina H."/>
            <person name="Van Buggenhout G."/>
            <person name="Lyonnet S."/>
            <person name="Notarangelo L.D."/>
            <person name="Seppaenen M.R.J."/>
            <person name="Weil R."/>
            <person name="Seminario G."/>
            <person name="Gomez-Tello H."/>
            <person name="Wouters C."/>
            <person name="Mesdaghi M."/>
            <person name="Shahrooei M."/>
            <person name="Bossuyt X."/>
            <person name="Sag E."/>
            <person name="Topaloglu R."/>
            <person name="Ozen S."/>
            <person name="Leavis H.L."/>
            <person name="van Eijk M.M.J."/>
            <person name="Bezrodnik L."/>
            <person name="Blancas Galicia L."/>
            <person name="Hovnanian A."/>
            <person name="Nassif A."/>
            <person name="Bader-Meunier B."/>
            <person name="Neven B."/>
            <person name="Meyts I."/>
            <person name="Schrijvers R."/>
            <person name="Puel A."/>
            <person name="Bustamante J."/>
            <person name="Aksentijevich I."/>
            <person name="Kastner D.L."/>
            <person name="Torres V.J."/>
            <person name="Humblet-Baron S."/>
            <person name="Liston A."/>
            <person name="Abel L."/>
            <person name="Boisson B."/>
            <person name="Casanova J.L."/>
        </authorList>
    </citation>
    <scope>INVOLVEMENT IN IMD107</scope>
    <scope>VARIANTS IMD107 95-GLU--LEU-352 DEL; CYS-244; VAL-246; GLN-263 AND PRO-272</scope>
    <scope>CHARACTERIZATION OF VARIANTS IMD107 95-GLU--LEU-352 DEL; CYS-244; VAL-246; GLN-263 AND PRO-272</scope>
    <scope>MUTAGENESIS OF PRO-254; GLY-281 AND ASN-341</scope>
    <scope>FUNCTION</scope>
    <scope>CHARACTERIZATION OF VARIANT HIS-115</scope>
</reference>
<reference key="14">
    <citation type="journal article" date="2013" name="Cell">
        <title>OTULIN antagonizes LUBAC signaling by specifically hydrolyzing Met1-linked polyubiquitin.</title>
        <authorList>
            <person name="Keusekotten K."/>
            <person name="Elliott P.R."/>
            <person name="Glockner L."/>
            <person name="Fiil B.K."/>
            <person name="Damgaard R.B."/>
            <person name="Kulathu Y."/>
            <person name="Wauer T."/>
            <person name="Hospenthal M.K."/>
            <person name="Gyrd-Hansen M."/>
            <person name="Krappmann D."/>
            <person name="Hofmann K."/>
            <person name="Komander D."/>
        </authorList>
    </citation>
    <scope>X-RAY CRYSTALLOGRAPHY (1.3 ANGSTROMS) OF MUTANT ASP-336</scope>
    <scope>X-RAY CRYSTALLOGRAPHY (1.35 ANGSTROMS) IN COMPLEX WITH LINEAR DIUBIQUITIN</scope>
    <scope>FUNCTION</scope>
    <scope>CATALYTIC ACTIVITY</scope>
    <scope>BIOPHYSICOCHEMICAL PROPERTIES</scope>
    <scope>SUBCELLULAR LOCATION</scope>
    <scope>PHOSPHORYLATION</scope>
    <scope>UBIQUITINATION</scope>
    <scope>ACETYLATION</scope>
    <scope>MUTAGENESIS OF TYR-91; TRP-96; 100-THR--LYS-102; CYS-129; LEU-259; GLU-314; ASP-336; HIS-339 AND ASN-341</scope>
    <scope>ACTIVE SITE</scope>
</reference>
<reference key="15">
    <citation type="journal article" date="2013" name="Nature">
        <title>The linear ubiquitin-specific deubiquitinase gumby regulates angiogenesis.</title>
        <authorList>
            <person name="Rivkin E."/>
            <person name="Almeida S.M."/>
            <person name="Ceccarelli D.F."/>
            <person name="Juang Y.C."/>
            <person name="Maclean T.A."/>
            <person name="Srikumar T."/>
            <person name="Huang H."/>
            <person name="Dunham W.H."/>
            <person name="Fukumura R."/>
            <person name="Xie G."/>
            <person name="Gondo Y."/>
            <person name="Raught B."/>
            <person name="Gingras A.C."/>
            <person name="Sicheri F."/>
            <person name="Cordes S.P."/>
        </authorList>
    </citation>
    <scope>X-RAY CRYSTALLOGRAPHY (1.6 ANGSTROMS) OF 79-352 OF MUTANT CYS-129</scope>
    <scope>X-RAY CRYSTALLOGRAPHY (2.8 ANGSTROMS) OF 79-352 OF MUTANT CYS-129 IN COMPLEX WITH LINEAR DIUBIQUITIN</scope>
    <scope>FUNCTION</scope>
    <scope>INTERACTION WITH RNF31 AND DVL2</scope>
    <scope>MUTAGENESIS OF CYS-129</scope>
    <scope>ACTIVE SITE</scope>
</reference>
<reference key="16">
    <citation type="journal article" date="2014" name="Mol. Cell">
        <title>Molecular basis and regulation of OTULIN-LUBAC interaction.</title>
        <authorList>
            <person name="Elliott P.R."/>
            <person name="Nielsen S.V."/>
            <person name="Marco-Casanova P."/>
            <person name="Fiil B.K."/>
            <person name="Keusekotten K."/>
            <person name="Mailand N."/>
            <person name="Freund S.M."/>
            <person name="Gyrd-Hansen M."/>
            <person name="Komander D."/>
        </authorList>
    </citation>
    <scope>X-RAY CRYSTALLOGRAPHY (2.0 ANGSTROMS) OF 49-67 IN COMPLEX WITH RNF31</scope>
    <scope>FUNCTION</scope>
    <scope>INTERACTION WITH RNF31</scope>
    <scope>DOMAIN</scope>
    <scope>PHOSPHORYLATION AT TYR-56</scope>
    <scope>MUTAGENESIS OF ASP-54; MET-55 AND TYR-56</scope>
</reference>
<reference key="17">
    <citation type="journal article" date="2014" name="Mol. Cell">
        <title>Binding of OTULIN to the PUB domain of HOIP controls NF-kappaB signaling.</title>
        <authorList>
            <person name="Schaeffer V."/>
            <person name="Akutsu M."/>
            <person name="Olma M.H."/>
            <person name="Gomes L.C."/>
            <person name="Kawasaki M."/>
            <person name="Dikic I."/>
        </authorList>
    </citation>
    <scope>X-RAY CRYSTALLOGRAPHY (2.7 ANGSTROMS) OF 52-61 IN COMPLEX WITH RNF31</scope>
    <scope>FUNCTION</scope>
    <scope>INTERACTION WITH RNF31</scope>
    <scope>DOMAIN</scope>
    <scope>PHOSPHORYLATION AT TYR-56</scope>
    <scope>ACTIVE SITE</scope>
    <scope>MUTAGENESIS OF TYR-56 AND CYS-129</scope>
</reference>
<reference evidence="27" key="18">
    <citation type="journal article" date="2017" name="Cell Chem. Biol.">
        <title>A linear diubiquitin-based probe for efficient and selective detection of the deubiquitinating enzyme OTULIN.</title>
        <authorList>
            <person name="Weber A."/>
            <person name="Elliott P.R."/>
            <person name="Pinto-Fernandez A."/>
            <person name="Bonham S."/>
            <person name="Kessler B.M."/>
            <person name="Komander D."/>
            <person name="El Oualid F."/>
            <person name="Krappmann D."/>
        </authorList>
    </citation>
    <scope>X-RAY CRYSTALLOGRAPHY (2.95 ANGSTROMS) OF 80-350</scope>
    <scope>FUNCTION</scope>
    <scope>CATALYTIC ACTIVITY</scope>
    <scope>MUTAGENESIS OF CYS-129</scope>
</reference>
<reference evidence="28" key="19">
    <citation type="journal article" date="2019" name="EMBO Mol. Med.">
        <title>OTULIN deficiency in ORAS causes cell type-specific LUBAC degradation, dysregulated TNF signalling and cell death.</title>
        <authorList>
            <person name="Damgaard R.B."/>
            <person name="Elliott P.R."/>
            <person name="Swatek K.N."/>
            <person name="Maher E.R."/>
            <person name="Stepensky P."/>
            <person name="Elpeleg O."/>
            <person name="Komander D."/>
            <person name="Berkun Y."/>
        </authorList>
    </citation>
    <scope>X-RAY CRYSTALLOGRAPHY (1.77 ANGSTROMS) OF 80-345 OF VARIANT AIPDSB ARG-281</scope>
    <scope>VARIANT AIPDSB ARG-281</scope>
    <scope>CHARACTERIZATION OF VARIANT AIPDSB ARG-281</scope>
    <scope>FUNCTION</scope>
    <scope>CATALYTIC ACTIVITY</scope>
</reference>
<reference key="20">
    <citation type="journal article" date="2022" name="EMBO Mol. Med.">
        <title>Compound heterozygous variants in OTULIN are associated with fulminant atypical late-onset ORAS.</title>
        <authorList>
            <person name="Zinngrebe J."/>
            <person name="Moepps B."/>
            <person name="Monecke T."/>
            <person name="Gierschik P."/>
            <person name="Schlichtig F."/>
            <person name="Barth T.F.E."/>
            <person name="Strauss G."/>
            <person name="Boldrin E."/>
            <person name="Posovszky C."/>
            <person name="Schulz A."/>
            <person name="Beringer O."/>
            <person name="Rieser E."/>
            <person name="Jacobsen E.M."/>
            <person name="Lorenz M.R."/>
            <person name="Schwarz K."/>
            <person name="Pannicke U."/>
            <person name="Walczak H."/>
            <person name="Niessing D."/>
            <person name="Schuetz C."/>
            <person name="Fischer-Posovszky P."/>
            <person name="Debatin K.M."/>
        </authorList>
    </citation>
    <scope>VARIANTS AIPDSB ILE-86 AND SER-167</scope>
    <scope>CHARACTERIZATION OF VARIANTS AIPDSB ILE-86 AND SER-167</scope>
    <scope>FUNCTION</scope>
    <scope>CATALYTIC ACTIVITY</scope>
</reference>
<reference key="21">
    <citation type="journal article" date="2024" name="J. Exp. Med.">
        <title>Dominant negative OTULIN-related autoinflammatory syndrome.</title>
        <authorList>
            <consortium name="CIRCA"/>
            <consortium name="AADRY"/>
            <person name="Davidson S."/>
            <person name="Shibata Y."/>
            <person name="Collard S."/>
            <person name="Zheng H."/>
            <person name="Kong K."/>
            <person name="Sun J.M."/>
            <person name="Laohamonthonkul P."/>
            <person name="Cerra A."/>
            <person name="Kratina T."/>
            <person name="Li M.W.Y."/>
            <person name="Russell C."/>
            <person name="van Beek A."/>
            <person name="Kirk E.P."/>
            <person name="Walsh R."/>
            <person name="Alqanatish J."/>
            <person name="Almojali A."/>
            <person name="Alsuwairi W."/>
            <person name="Alrasheed A."/>
            <person name="Lalaoui N."/>
            <person name="Gray P.E."/>
            <person name="Komander D."/>
            <person name="Masters S.L."/>
        </authorList>
    </citation>
    <scope>VARIANT AIPDSA SER-129</scope>
    <scope>CHARACTERIZATION OF VARIANT AIPDSA SER-129</scope>
    <scope>FUNCTION</scope>
    <scope>CATALYTIC ACTIVITY</scope>
</reference>
<reference key="22">
    <citation type="journal article" date="2024" name="J. Exp. Med.">
        <title>A de novo dominant-negative variant is associated with OTULIN-related autoinflammatory syndrome.</title>
        <authorList>
            <person name="Takeda Y."/>
            <person name="Ueki M."/>
            <person name="Matsuhiro J."/>
            <person name="Walinda E."/>
            <person name="Tanaka T."/>
            <person name="Yamada M."/>
            <person name="Fujita H."/>
            <person name="Takezaki S."/>
            <person name="Kobayashi I."/>
            <person name="Tamaki S."/>
            <person name="Nagata S."/>
            <person name="Miyake N."/>
            <person name="Matsumoto N."/>
            <person name="Osawa M."/>
            <person name="Yasumi T."/>
            <person name="Heike T."/>
            <person name="Ohtake F."/>
            <person name="Saito M.K."/>
            <person name="Toguchida J."/>
            <person name="Takita J."/>
            <person name="Ariga T."/>
            <person name="Iwai K."/>
        </authorList>
    </citation>
    <scope>VARIANTS AIPDSA LEU-152 AND GLN-306</scope>
    <scope>CHARACTERIZATION VARIANTS AIPDSA LEU-152 AND GLN-306</scope>
    <scope>FUNCTION</scope>
    <scope>CATALYTIC ACTIVITY</scope>
</reference>
<organism>
    <name type="scientific">Homo sapiens</name>
    <name type="common">Human</name>
    <dbReference type="NCBI Taxonomy" id="9606"/>
    <lineage>
        <taxon>Eukaryota</taxon>
        <taxon>Metazoa</taxon>
        <taxon>Chordata</taxon>
        <taxon>Craniata</taxon>
        <taxon>Vertebrata</taxon>
        <taxon>Euteleostomi</taxon>
        <taxon>Mammalia</taxon>
        <taxon>Eutheria</taxon>
        <taxon>Euarchontoglires</taxon>
        <taxon>Primates</taxon>
        <taxon>Haplorrhini</taxon>
        <taxon>Catarrhini</taxon>
        <taxon>Hominidae</taxon>
        <taxon>Homo</taxon>
    </lineage>
</organism>
<name>OTUL_HUMAN</name>
<protein>
    <recommendedName>
        <fullName evidence="22">Ubiquitin thioesterase otulin</fullName>
        <ecNumber evidence="5 7 13 15">3.4.19.12</ecNumber>
    </recommendedName>
    <alternativeName>
        <fullName evidence="21">Deubiquitinating enzyme otulin</fullName>
    </alternativeName>
    <alternativeName>
        <fullName evidence="21">OTU domain-containing deubiquitinase with linear linkage specificity</fullName>
    </alternativeName>
    <alternativeName>
        <fullName evidence="1">Ubiquitin thioesterase Gumby</fullName>
    </alternativeName>
</protein>
<comment type="function">
    <text evidence="4 5 6 7 8 9 10 11 13 14 15 16 17 18 19 20">Deubiquitinase that specifically removes linear ('Met-1'-linked) polyubiquitin chains to substrates and acts as a regulator of angiogenesis and innate immune response (PubMed:23708998, PubMed:23746843, PubMed:23806334, PubMed:23827681, PubMed:24726323, PubMed:24726327, PubMed:26997266, PubMed:27523608, PubMed:27559085, PubMed:28919039, PubMed:30804083, PubMed:35170849, PubMed:35587511, PubMed:38630025, PubMed:38652464). Required during angiogenesis, craniofacial and neuronal development by regulating the canonical Wnt signaling together with the LUBAC complex (PubMed:23708998). Acts as a negative regulator of NF-kappa-B by regulating the activity of the LUBAC complex (PubMed:23746843, PubMed:23806334). OTULIN function is mainly restricted to homeostasis of the LUBAC complex: acts by removing 'Met-1'-linked autoubiquitination of the LUBAC complex, thereby preventing inactivation of the LUBAC complex (PubMed:26670046). Acts as a key negative regulator of inflammation by restricting spontaneous inflammation and maintaining immune homeostasis (PubMed:27523608). In myeloid cell, required to prevent unwarranted secretion of cytokines leading to inflammation and autoimmunity by restricting linear polyubiquitin formation (PubMed:27523608). Plays a role in innate immune response by restricting linear polyubiquitin formation on LUBAC complex in response to NOD2 stimulation, probably to limit NOD2-dependent pro-inflammatory signaling (PubMed:23806334).</text>
</comment>
<comment type="catalytic activity">
    <reaction evidence="5 7 13 15 16 17 19 20">
        <text>Thiol-dependent hydrolysis of ester, thioester, amide, peptide and isopeptide bonds formed by the C-terminal Gly of ubiquitin (a 76-residue protein attached to proteins as an intracellular targeting signal).</text>
        <dbReference type="EC" id="3.4.19.12"/>
    </reaction>
</comment>
<comment type="biophysicochemical properties">
    <kinetics>
        <KM evidence="5">7.98 uM for linear diubiquitin</KM>
        <text evidence="5">kcat is 6.3 sec(-1) with linear diubiquitin as substrate.</text>
    </kinetics>
</comment>
<comment type="subunit">
    <text evidence="1 4 5 8 9 13">Interacts (via the PUB domain) with RNF31 (via the PIM motif); the interaction is direct (PubMed:23708998, PubMed:23746843, PubMed:24726323, PubMed:24726327, PubMed:27523608). Interacts with DVL2 (By similarity).</text>
</comment>
<comment type="interaction">
    <interactant intactId="EBI-750730">
        <id>Q96BN8</id>
    </interactant>
    <interactant intactId="EBI-724310">
        <id>Q15038</id>
        <label>DAZAP2</label>
    </interactant>
    <organismsDiffer>false</organismsDiffer>
    <experiments>6</experiments>
</comment>
<comment type="interaction">
    <interactant intactId="EBI-750730">
        <id>Q96BN8</id>
    </interactant>
    <interactant intactId="EBI-7957930">
        <id>Q92567</id>
        <label>FAM168A</label>
    </interactant>
    <organismsDiffer>false</organismsDiffer>
    <experiments>3</experiments>
</comment>
<comment type="interaction">
    <interactant intactId="EBI-750730">
        <id>Q96BN8</id>
    </interactant>
    <interactant intactId="EBI-11978259">
        <id>Q92567-2</id>
        <label>FAM168A</label>
    </interactant>
    <organismsDiffer>false</organismsDiffer>
    <experiments>3</experiments>
</comment>
<comment type="interaction">
    <interactant intactId="EBI-750730">
        <id>Q96BN8</id>
    </interactant>
    <interactant intactId="EBI-527784">
        <id>Q6GQQ9</id>
        <label>OTUD7B</label>
    </interactant>
    <organismsDiffer>false</organismsDiffer>
    <experiments>3</experiments>
</comment>
<comment type="interaction">
    <interactant intactId="EBI-750730">
        <id>Q96BN8</id>
    </interactant>
    <interactant intactId="EBI-2854842">
        <id>Q8WV19</id>
        <label>SFT2D1</label>
    </interactant>
    <organismsDiffer>false</organismsDiffer>
    <experiments>3</experiments>
</comment>
<comment type="interaction">
    <interactant intactId="EBI-750730">
        <id>Q96BN8</id>
    </interactant>
    <interactant intactId="EBI-2643803">
        <id>Q8N0X7</id>
        <label>SPART</label>
    </interactant>
    <organismsDiffer>false</organismsDiffer>
    <experiments>3</experiments>
</comment>
<comment type="interaction">
    <interactant intactId="EBI-750730">
        <id>Q96BN8</id>
    </interactant>
    <interactant intactId="EBI-2866213">
        <id>Q92537</id>
        <label>SUSD6</label>
    </interactant>
    <organismsDiffer>false</organismsDiffer>
    <experiments>3</experiments>
</comment>
<comment type="interaction">
    <interactant intactId="EBI-750730">
        <id>Q96BN8</id>
    </interactant>
    <interactant intactId="EBI-11528917">
        <id>Q8WW34-2</id>
        <label>TMEM239</label>
    </interactant>
    <organismsDiffer>false</organismsDiffer>
    <experiments>3</experiments>
</comment>
<comment type="subcellular location">
    <subcellularLocation>
        <location evidence="5">Cytoplasm</location>
    </subcellularLocation>
</comment>
<comment type="domain">
    <text evidence="5">The specificity for linear polyubiquitin is given by the 'Glu-16' residue in ubiquitin chain.</text>
</comment>
<comment type="domain">
    <text evidence="8 9 12">The PIM (PUB-interaction motif) motif mediates interaction with the PUB domain of RNF31 (PubMed:24726323, PubMed:24726327, PubMed:27458237). Does not interact with other PUB domain-containing proteins. Phosphorylation at Tyr-56 prevents interaction with RNF31 (PubMed:24726323, PubMed:24726327).</text>
</comment>
<comment type="PTM">
    <text evidence="5">Ubiquitinated.</text>
</comment>
<comment type="PTM">
    <text evidence="5">Acetylated.</text>
</comment>
<comment type="PTM">
    <text evidence="5 8 9">Phosphorylated (PubMed:23746843, PubMed:24726323, PubMed:24726327). Phosphorylation at Tyr-56 prevents interaction with RNF31; dephosphorylation promotes interaction with RNF31 and the LUBAC complex (PubMed:24726323, PubMed:24726327).</text>
</comment>
<comment type="disease" evidence="13 14 16 17">
    <disease id="DI-04791">
        <name>Autoinflammation, panniculitis, and dermatosis syndrome, autosomal recessive</name>
        <acronym>AIPDSB</acronym>
        <description>An autosomal recessive autoinflammatory disorder characterized by neonatal-onset of fever, neutrophilic dermatitis, panniculitis, painful joints, failure to thrive. Patients do not exhibit overt primary immunodeficiency.</description>
        <dbReference type="MIM" id="617099"/>
    </disease>
    <text>The disease is caused by variants affecting the gene represented in this entry.</text>
</comment>
<comment type="disease" evidence="19 20">
    <disease id="DI-06980">
        <name>Autoinflammation, panniculitis, and dermatosis syndrome, autosomal dominant</name>
        <acronym>AIPDSA</acronym>
        <description>An autosomal dominant disorder characterized by the onset of autoinflammatory features in infancy, including fever, aseptic skin lesions, panniculitis, and poor wound healing. Patients do not exhibit signs of immunodeficiency.</description>
        <dbReference type="MIM" id="621030"/>
    </disease>
    <text>The disease is caused by variants affecting the gene represented in this entry.</text>
</comment>
<comment type="disease" evidence="18">
    <disease id="DI-06476">
        <name>Immunodeficiency 107, susceptibility to invasive Staphylococcus aureus infection</name>
        <acronym>IMD107</acronym>
        <description>An autosomal dominant immunologic disorder characterized by increased susceptibility to invasive and severe Staphylococcus aureus infection, causing life-threatening skin or pulmonary necrosis. Clinically, penetrance is incomplete and expressivity is variable.</description>
        <dbReference type="MIM" id="619986"/>
    </disease>
    <text evidence="18">Disease susceptibility is associated with variants affecting the gene represented in this entry. OTULIN haploinsufficiency underlies life-threatening staphylococcal disease by disrupting cell-intrinsic immunity to alpha-toxin in non-leukocytic cells.</text>
</comment>
<comment type="similarity">
    <text evidence="22">Belongs to the peptidase C65 family. Otulin subfamily.</text>
</comment>
<comment type="caution">
    <text evidence="1 6 10 11 13">The key substrates of OTULIN and where OTULIN acts to limit inflammation have been subject to discussion. According to some reports, OTULIN plays active roles in TNF or NOD2 receptor signaling complexes (RSCs) by directly deubiquitinating proteins in these complexes (PubMed:26997266, PubMed:27523608). A publication also suggested that OTULIN directly mediates deubiquitination of RIPK2 (PubMed:23806334). However, a publication reported that OTULIN function is restricted to homeostasis of the LUBAC complex, because it is not stably associated with TNF or NOD2 receptor signaling complexes (RSCs) (PubMed:26670046). The main function of OTULIN in deubiquitinating the LUBAC complex was confirmed by knockin experiments in mouse.</text>
</comment>
<comment type="sequence caution" evidence="22">
    <conflict type="erroneous initiation">
        <sequence resource="EMBL-CDS" id="AAH07706"/>
    </conflict>
    <text>Truncated N-terminus.</text>
</comment>
<comment type="sequence caution" evidence="22">
    <conflict type="erroneous initiation">
        <sequence resource="EMBL-CDS" id="AAH15392"/>
    </conflict>
    <text>Truncated N-terminus.</text>
</comment>
<comment type="sequence caution" evidence="22">
    <conflict type="erroneous initiation">
        <sequence resource="EMBL-CDS" id="BAC03828"/>
    </conflict>
    <text>Truncated N-terminus.</text>
</comment>
<proteinExistence type="evidence at protein level"/>
<keyword id="KW-0002">3D-structure</keyword>
<keyword id="KW-0007">Acetylation</keyword>
<keyword id="KW-0037">Angiogenesis</keyword>
<keyword id="KW-0963">Cytoplasm</keyword>
<keyword id="KW-0225">Disease variant</keyword>
<keyword id="KW-0378">Hydrolase</keyword>
<keyword id="KW-0391">Immunity</keyword>
<keyword id="KW-0399">Innate immunity</keyword>
<keyword id="KW-0597">Phosphoprotein</keyword>
<keyword id="KW-0645">Protease</keyword>
<keyword id="KW-1267">Proteomics identification</keyword>
<keyword id="KW-1185">Reference proteome</keyword>
<keyword id="KW-0788">Thiol protease</keyword>
<keyword id="KW-0832">Ubl conjugation</keyword>
<keyword id="KW-0833">Ubl conjugation pathway</keyword>
<keyword id="KW-0879">Wnt signaling pathway</keyword>
<dbReference type="EC" id="3.4.19.12" evidence="5 7 13 15"/>
<dbReference type="EMBL" id="AC010491">
    <property type="status" value="NOT_ANNOTATED_CDS"/>
    <property type="molecule type" value="Genomic_DNA"/>
</dbReference>
<dbReference type="EMBL" id="CH471102">
    <property type="protein sequence ID" value="EAX08038.1"/>
    <property type="molecule type" value="Genomic_DNA"/>
</dbReference>
<dbReference type="EMBL" id="CH471102">
    <property type="protein sequence ID" value="EAX08039.1"/>
    <property type="molecule type" value="Genomic_DNA"/>
</dbReference>
<dbReference type="EMBL" id="BC007706">
    <property type="protein sequence ID" value="AAH07706.3"/>
    <property type="status" value="ALT_INIT"/>
    <property type="molecule type" value="mRNA"/>
</dbReference>
<dbReference type="EMBL" id="BC015392">
    <property type="protein sequence ID" value="AAH15392.2"/>
    <property type="status" value="ALT_INIT"/>
    <property type="molecule type" value="mRNA"/>
</dbReference>
<dbReference type="EMBL" id="AK092203">
    <property type="protein sequence ID" value="BAC03828.1"/>
    <property type="status" value="ALT_INIT"/>
    <property type="molecule type" value="mRNA"/>
</dbReference>
<dbReference type="CCDS" id="CCDS43302.1"/>
<dbReference type="RefSeq" id="NP_612357.4">
    <property type="nucleotide sequence ID" value="NM_138348.5"/>
</dbReference>
<dbReference type="RefSeq" id="XP_011512453.1">
    <property type="nucleotide sequence ID" value="XM_011514151.3"/>
</dbReference>
<dbReference type="RefSeq" id="XP_011512454.1">
    <property type="nucleotide sequence ID" value="XM_011514152.2"/>
</dbReference>
<dbReference type="RefSeq" id="XP_054209727.1">
    <property type="nucleotide sequence ID" value="XM_054353752.1"/>
</dbReference>
<dbReference type="PDB" id="3ZNV">
    <property type="method" value="X-ray"/>
    <property type="resolution" value="1.30 A"/>
    <property type="chains" value="A=80-352"/>
</dbReference>
<dbReference type="PDB" id="3ZNX">
    <property type="method" value="X-ray"/>
    <property type="resolution" value="1.35 A"/>
    <property type="chains" value="A=80-352"/>
</dbReference>
<dbReference type="PDB" id="3ZNZ">
    <property type="method" value="X-ray"/>
    <property type="resolution" value="1.90 A"/>
    <property type="chains" value="A=80-352"/>
</dbReference>
<dbReference type="PDB" id="4KSJ">
    <property type="method" value="X-ray"/>
    <property type="resolution" value="1.60 A"/>
    <property type="chains" value="A=79-352"/>
</dbReference>
<dbReference type="PDB" id="4KSK">
    <property type="method" value="X-ray"/>
    <property type="resolution" value="2.40 A"/>
    <property type="chains" value="A/B=55-352"/>
</dbReference>
<dbReference type="PDB" id="4KSL">
    <property type="method" value="X-ray"/>
    <property type="resolution" value="2.83 A"/>
    <property type="chains" value="A/B/E/G/I/K/M/O/Q/S/U/W=79-352"/>
</dbReference>
<dbReference type="PDB" id="4OYK">
    <property type="method" value="X-ray"/>
    <property type="resolution" value="2.00 A"/>
    <property type="chains" value="C/D=49-67"/>
</dbReference>
<dbReference type="PDB" id="4P0B">
    <property type="method" value="X-ray"/>
    <property type="resolution" value="2.70 A"/>
    <property type="chains" value="B/D=52-61"/>
</dbReference>
<dbReference type="PDB" id="5OE7">
    <property type="method" value="X-ray"/>
    <property type="resolution" value="2.95 A"/>
    <property type="chains" value="A=80-350"/>
</dbReference>
<dbReference type="PDB" id="6I9C">
    <property type="method" value="X-ray"/>
    <property type="resolution" value="1.77 A"/>
    <property type="chains" value="A=80-345"/>
</dbReference>
<dbReference type="PDB" id="6SAK">
    <property type="method" value="X-ray"/>
    <property type="resolution" value="2.00 A"/>
    <property type="chains" value="A/B=80-352"/>
</dbReference>
<dbReference type="PDBsum" id="3ZNV"/>
<dbReference type="PDBsum" id="3ZNX"/>
<dbReference type="PDBsum" id="3ZNZ"/>
<dbReference type="PDBsum" id="4KSJ"/>
<dbReference type="PDBsum" id="4KSK"/>
<dbReference type="PDBsum" id="4KSL"/>
<dbReference type="PDBsum" id="4OYK"/>
<dbReference type="PDBsum" id="4P0B"/>
<dbReference type="PDBsum" id="5OE7"/>
<dbReference type="PDBsum" id="6I9C"/>
<dbReference type="PDBsum" id="6SAK"/>
<dbReference type="SMR" id="Q96BN8"/>
<dbReference type="BioGRID" id="124684">
    <property type="interactions" value="170"/>
</dbReference>
<dbReference type="FunCoup" id="Q96BN8">
    <property type="interactions" value="1638"/>
</dbReference>
<dbReference type="IntAct" id="Q96BN8">
    <property type="interactions" value="44"/>
</dbReference>
<dbReference type="MINT" id="Q96BN8"/>
<dbReference type="STRING" id="9606.ENSP00000284274"/>
<dbReference type="GlyGen" id="Q96BN8">
    <property type="glycosylation" value="2 sites, 1 O-linked glycan (1 site)"/>
</dbReference>
<dbReference type="iPTMnet" id="Q96BN8"/>
<dbReference type="PhosphoSitePlus" id="Q96BN8"/>
<dbReference type="BioMuta" id="OTULIN"/>
<dbReference type="DMDM" id="118572305"/>
<dbReference type="jPOST" id="Q96BN8"/>
<dbReference type="MassIVE" id="Q96BN8"/>
<dbReference type="PaxDb" id="9606-ENSP00000284274"/>
<dbReference type="PeptideAtlas" id="Q96BN8"/>
<dbReference type="ProteomicsDB" id="76094"/>
<dbReference type="Pumba" id="Q96BN8"/>
<dbReference type="Antibodypedia" id="56178">
    <property type="antibodies" value="92 antibodies from 22 providers"/>
</dbReference>
<dbReference type="DNASU" id="90268"/>
<dbReference type="Ensembl" id="ENST00000284274.5">
    <property type="protein sequence ID" value="ENSP00000284274.4"/>
    <property type="gene ID" value="ENSG00000154124.7"/>
</dbReference>
<dbReference type="Ensembl" id="ENST00000850613.1">
    <property type="protein sequence ID" value="ENSP00000520900.1"/>
    <property type="gene ID" value="ENSG00000154124.7"/>
</dbReference>
<dbReference type="GeneID" id="90268"/>
<dbReference type="KEGG" id="hsa:90268"/>
<dbReference type="MANE-Select" id="ENST00000284274.5">
    <property type="protein sequence ID" value="ENSP00000284274.4"/>
    <property type="RefSeq nucleotide sequence ID" value="NM_138348.6"/>
    <property type="RefSeq protein sequence ID" value="NP_612357.4"/>
</dbReference>
<dbReference type="UCSC" id="uc003jfk.4">
    <property type="organism name" value="human"/>
</dbReference>
<dbReference type="AGR" id="HGNC:25118"/>
<dbReference type="CTD" id="90268"/>
<dbReference type="DisGeNET" id="90268"/>
<dbReference type="GeneCards" id="OTULIN"/>
<dbReference type="HGNC" id="HGNC:25118">
    <property type="gene designation" value="OTULIN"/>
</dbReference>
<dbReference type="HPA" id="ENSG00000154124">
    <property type="expression patterns" value="Tissue enhanced (bone)"/>
</dbReference>
<dbReference type="MalaCards" id="OTULIN"/>
<dbReference type="MIM" id="615712">
    <property type="type" value="gene"/>
</dbReference>
<dbReference type="MIM" id="617099">
    <property type="type" value="phenotype"/>
</dbReference>
<dbReference type="MIM" id="619986">
    <property type="type" value="phenotype"/>
</dbReference>
<dbReference type="MIM" id="621030">
    <property type="type" value="phenotype"/>
</dbReference>
<dbReference type="neXtProt" id="NX_Q96BN8"/>
<dbReference type="OpenTargets" id="ENSG00000154124"/>
<dbReference type="Orphanet" id="500062">
    <property type="disease" value="Infantile-onset periodic fever-panniculitis-dermatosis syndrome"/>
</dbReference>
<dbReference type="PharmGKB" id="PA142671789"/>
<dbReference type="VEuPathDB" id="HostDB:ENSG00000154124"/>
<dbReference type="eggNOG" id="ENOG502QTB8">
    <property type="taxonomic scope" value="Eukaryota"/>
</dbReference>
<dbReference type="GeneTree" id="ENSGT00390000009802"/>
<dbReference type="HOGENOM" id="CLU_051856_1_1_1"/>
<dbReference type="InParanoid" id="Q96BN8"/>
<dbReference type="OMA" id="CAFRATL"/>
<dbReference type="OrthoDB" id="6288034at2759"/>
<dbReference type="PAN-GO" id="Q96BN8">
    <property type="GO annotations" value="7 GO annotations based on evolutionary models"/>
</dbReference>
<dbReference type="PhylomeDB" id="Q96BN8"/>
<dbReference type="TreeFam" id="TF328709"/>
<dbReference type="PathwayCommons" id="Q96BN8"/>
<dbReference type="Reactome" id="R-HSA-5357905">
    <property type="pathway name" value="Regulation of TNFR1 signaling"/>
</dbReference>
<dbReference type="Reactome" id="R-HSA-8866652">
    <property type="pathway name" value="Synthesis of active ubiquitin: roles of E1 and E2 enzymes"/>
</dbReference>
<dbReference type="SignaLink" id="Q96BN8"/>
<dbReference type="SIGNOR" id="Q96BN8"/>
<dbReference type="BioGRID-ORCS" id="90268">
    <property type="hits" value="16 hits in 1191 CRISPR screens"/>
</dbReference>
<dbReference type="ChiTaRS" id="OTULIN">
    <property type="organism name" value="human"/>
</dbReference>
<dbReference type="EvolutionaryTrace" id="Q96BN8"/>
<dbReference type="GenomeRNAi" id="90268"/>
<dbReference type="Pharos" id="Q96BN8">
    <property type="development level" value="Tbio"/>
</dbReference>
<dbReference type="PRO" id="PR:Q96BN8"/>
<dbReference type="Proteomes" id="UP000005640">
    <property type="component" value="Chromosome 5"/>
</dbReference>
<dbReference type="RNAct" id="Q96BN8">
    <property type="molecule type" value="protein"/>
</dbReference>
<dbReference type="Bgee" id="ENSG00000154124">
    <property type="expression patterns" value="Expressed in buccal mucosa cell and 166 other cell types or tissues"/>
</dbReference>
<dbReference type="ExpressionAtlas" id="Q96BN8">
    <property type="expression patterns" value="baseline and differential"/>
</dbReference>
<dbReference type="GO" id="GO:0005737">
    <property type="term" value="C:cytoplasm"/>
    <property type="evidence" value="ECO:0000314"/>
    <property type="project" value="UniProtKB"/>
</dbReference>
<dbReference type="GO" id="GO:0005829">
    <property type="term" value="C:cytosol"/>
    <property type="evidence" value="ECO:0000304"/>
    <property type="project" value="Reactome"/>
</dbReference>
<dbReference type="GO" id="GO:0071797">
    <property type="term" value="C:LUBAC complex"/>
    <property type="evidence" value="ECO:0007669"/>
    <property type="project" value="Ensembl"/>
</dbReference>
<dbReference type="GO" id="GO:0004843">
    <property type="term" value="F:cysteine-type deubiquitinase activity"/>
    <property type="evidence" value="ECO:0000314"/>
    <property type="project" value="UniProtKB"/>
</dbReference>
<dbReference type="GO" id="GO:0008234">
    <property type="term" value="F:cysteine-type peptidase activity"/>
    <property type="evidence" value="ECO:0000315"/>
    <property type="project" value="UniProtKB"/>
</dbReference>
<dbReference type="GO" id="GO:0045087">
    <property type="term" value="P:innate immune response"/>
    <property type="evidence" value="ECO:0000314"/>
    <property type="project" value="UniProtKB"/>
</dbReference>
<dbReference type="GO" id="GO:0050728">
    <property type="term" value="P:negative regulation of inflammatory response"/>
    <property type="evidence" value="ECO:0000315"/>
    <property type="project" value="UniProtKB"/>
</dbReference>
<dbReference type="GO" id="GO:0032088">
    <property type="term" value="P:negative regulation of NF-kappaB transcription factor activity"/>
    <property type="evidence" value="ECO:0000314"/>
    <property type="project" value="UniProtKB"/>
</dbReference>
<dbReference type="GO" id="GO:0070431">
    <property type="term" value="P:nucleotide-binding oligomerization domain containing 2 signaling pathway"/>
    <property type="evidence" value="ECO:0000315"/>
    <property type="project" value="UniProtKB"/>
</dbReference>
<dbReference type="GO" id="GO:1990108">
    <property type="term" value="P:protein linear deubiquitination"/>
    <property type="evidence" value="ECO:0000314"/>
    <property type="project" value="UniProtKB"/>
</dbReference>
<dbReference type="GO" id="GO:0016567">
    <property type="term" value="P:protein ubiquitination"/>
    <property type="evidence" value="ECO:0000304"/>
    <property type="project" value="Reactome"/>
</dbReference>
<dbReference type="GO" id="GO:0006508">
    <property type="term" value="P:proteolysis"/>
    <property type="evidence" value="ECO:0007669"/>
    <property type="project" value="UniProtKB-KW"/>
</dbReference>
<dbReference type="GO" id="GO:0060828">
    <property type="term" value="P:regulation of canonical Wnt signaling pathway"/>
    <property type="evidence" value="ECO:0000250"/>
    <property type="project" value="UniProtKB"/>
</dbReference>
<dbReference type="GO" id="GO:0010803">
    <property type="term" value="P:regulation of tumor necrosis factor-mediated signaling pathway"/>
    <property type="evidence" value="ECO:0000314"/>
    <property type="project" value="UniProtKB"/>
</dbReference>
<dbReference type="GO" id="GO:0002040">
    <property type="term" value="P:sprouting angiogenesis"/>
    <property type="evidence" value="ECO:0000250"/>
    <property type="project" value="UniProtKB"/>
</dbReference>
<dbReference type="GO" id="GO:0016055">
    <property type="term" value="P:Wnt signaling pathway"/>
    <property type="evidence" value="ECO:0007669"/>
    <property type="project" value="UniProtKB-KW"/>
</dbReference>
<dbReference type="CDD" id="cd22799">
    <property type="entry name" value="OTU_OTUL"/>
    <property type="match status" value="1"/>
</dbReference>
<dbReference type="InterPro" id="IPR023235">
    <property type="entry name" value="FAM105"/>
</dbReference>
<dbReference type="InterPro" id="IPR023237">
    <property type="entry name" value="Otulin"/>
</dbReference>
<dbReference type="PANTHER" id="PTHR33662">
    <property type="entry name" value="OTU DEUBIQUITINASE WITH LINEAR LINKAGE-SPECIFICITY A-RELATED"/>
    <property type="match status" value="1"/>
</dbReference>
<dbReference type="PANTHER" id="PTHR33662:SF2">
    <property type="entry name" value="UBIQUITIN THIOESTERASE OTULIN"/>
    <property type="match status" value="1"/>
</dbReference>
<dbReference type="Pfam" id="PF16218">
    <property type="entry name" value="Peptidase_C101"/>
    <property type="match status" value="1"/>
</dbReference>
<dbReference type="PRINTS" id="PR02055">
    <property type="entry name" value="PROTEINF105"/>
</dbReference>
<dbReference type="PRINTS" id="PR02057">
    <property type="entry name" value="PROTEINF105B"/>
</dbReference>
<accession>Q96BN8</accession>
<accession>D3DTD3</accession>
<accession>Q8NAS0</accession>
<accession>Q96IA3</accession>
<evidence type="ECO:0000250" key="1">
    <source>
        <dbReference type="UniProtKB" id="Q3UCV8"/>
    </source>
</evidence>
<evidence type="ECO:0000255" key="2">
    <source>
        <dbReference type="PROSITE-ProRule" id="PRU00139"/>
    </source>
</evidence>
<evidence type="ECO:0000256" key="3">
    <source>
        <dbReference type="SAM" id="MobiDB-lite"/>
    </source>
</evidence>
<evidence type="ECO:0000269" key="4">
    <source>
    </source>
</evidence>
<evidence type="ECO:0000269" key="5">
    <source>
    </source>
</evidence>
<evidence type="ECO:0000269" key="6">
    <source>
    </source>
</evidence>
<evidence type="ECO:0000269" key="7">
    <source>
    </source>
</evidence>
<evidence type="ECO:0000269" key="8">
    <source>
    </source>
</evidence>
<evidence type="ECO:0000269" key="9">
    <source>
    </source>
</evidence>
<evidence type="ECO:0000269" key="10">
    <source>
    </source>
</evidence>
<evidence type="ECO:0000269" key="11">
    <source>
    </source>
</evidence>
<evidence type="ECO:0000269" key="12">
    <source>
    </source>
</evidence>
<evidence type="ECO:0000269" key="13">
    <source>
    </source>
</evidence>
<evidence type="ECO:0000269" key="14">
    <source>
    </source>
</evidence>
<evidence type="ECO:0000269" key="15">
    <source>
    </source>
</evidence>
<evidence type="ECO:0000269" key="16">
    <source>
    </source>
</evidence>
<evidence type="ECO:0000269" key="17">
    <source>
    </source>
</evidence>
<evidence type="ECO:0000269" key="18">
    <source>
    </source>
</evidence>
<evidence type="ECO:0000269" key="19">
    <source>
    </source>
</evidence>
<evidence type="ECO:0000269" key="20">
    <source>
    </source>
</evidence>
<evidence type="ECO:0000303" key="21">
    <source>
    </source>
</evidence>
<evidence type="ECO:0000305" key="22"/>
<evidence type="ECO:0000312" key="23">
    <source>
        <dbReference type="HGNC" id="HGNC:25118"/>
    </source>
</evidence>
<evidence type="ECO:0007744" key="24">
    <source>
        <dbReference type="PDB" id="3ZNZ"/>
    </source>
</evidence>
<evidence type="ECO:0007744" key="25">
    <source>
        <dbReference type="PDB" id="4KSK"/>
    </source>
</evidence>
<evidence type="ECO:0007744" key="26">
    <source>
        <dbReference type="PDB" id="4KSL"/>
    </source>
</evidence>
<evidence type="ECO:0007744" key="27">
    <source>
        <dbReference type="PDB" id="5OE7"/>
    </source>
</evidence>
<evidence type="ECO:0007744" key="28">
    <source>
        <dbReference type="PDB" id="6I9C"/>
    </source>
</evidence>
<evidence type="ECO:0007829" key="29">
    <source>
        <dbReference type="PDB" id="3ZNV"/>
    </source>
</evidence>
<evidence type="ECO:0007829" key="30">
    <source>
        <dbReference type="PDB" id="3ZNZ"/>
    </source>
</evidence>
<evidence type="ECO:0007829" key="31">
    <source>
        <dbReference type="PDB" id="4KSL"/>
    </source>
</evidence>
<evidence type="ECO:0007829" key="32">
    <source>
        <dbReference type="PDB" id="4OYK"/>
    </source>
</evidence>
<evidence type="ECO:0007829" key="33">
    <source>
        <dbReference type="PDB" id="6SAK"/>
    </source>
</evidence>
<sequence length="352" mass="40263">MSRGTMPQPEAWPGASCAETPAREAAATARDGGKAAASGQPRPEMQCPAEHEEDMYRAADEIEKEKELLIHERGASEPRLSVAPEMDIMDYCKKEWRGNTQKATCMKMGYEEVSQKFTSIRRVRGDNYCALRATLFQAMSQAVGLPPWLQDPELMLLPEKLISKYNWIKQWKLGLKFDGKNEDLVDKIKESLTLLRKKWAGLAEMRTAEARQIACDELFTNEAEEYSLYEAVKFLMLNRAIELYNDKEKGKEVPFFSVLLFARDTSNDPGQLLRNHLNQVGHTGGLEQVEMFLLAYAVRHTIQVYRLSKYNTEEFITVYPTDPPKDWPVVTLIAEDDRHYNIPVRVCEETSL</sequence>
<feature type="chain" id="PRO_0000261637" description="Ubiquitin thioesterase otulin">
    <location>
        <begin position="1"/>
        <end position="352"/>
    </location>
</feature>
<feature type="domain" description="OTU" evidence="2">
    <location>
        <begin position="118"/>
        <end position="346"/>
    </location>
</feature>
<feature type="region of interest" description="Disordered" evidence="3">
    <location>
        <begin position="1"/>
        <end position="48"/>
    </location>
</feature>
<feature type="region of interest" description="Linear diubiquitin binding" evidence="4 5 24 26">
    <location>
        <begin position="95"/>
        <end position="96"/>
    </location>
</feature>
<feature type="region of interest" description="Linear diubiquitin binding" evidence="4 5 24 26">
    <location>
        <begin position="124"/>
        <end position="126"/>
    </location>
</feature>
<feature type="region of interest" description="Linear diubiquitin binding" evidence="4 5 24 25 26">
    <location>
        <begin position="255"/>
        <end position="259"/>
    </location>
</feature>
<feature type="region of interest" description="Linear diubiquitin binding" evidence="4 5 24 25 26">
    <location>
        <begin position="283"/>
        <end position="289"/>
    </location>
</feature>
<feature type="region of interest" description="Linear diubiquitin binding" evidence="4 5 24 26">
    <location>
        <begin position="336"/>
        <end position="338"/>
    </location>
</feature>
<feature type="short sequence motif" description="PIM motif" evidence="8 9 12">
    <location>
        <begin position="52"/>
        <end position="57"/>
    </location>
</feature>
<feature type="compositionally biased region" description="Low complexity" evidence="3">
    <location>
        <begin position="18"/>
        <end position="37"/>
    </location>
</feature>
<feature type="active site" evidence="4 5 24 26">
    <location>
        <position position="126"/>
    </location>
</feature>
<feature type="active site" description="Nucleophile" evidence="4 5 9 24 26">
    <location>
        <position position="129"/>
    </location>
</feature>
<feature type="active site" evidence="4 5 24 26">
    <location>
        <position position="339"/>
    </location>
</feature>
<feature type="site" description="Linear diubiquitin binding" evidence="4 5 24 25 26">
    <location>
        <position position="314"/>
    </location>
</feature>
<feature type="modified residue" description="Phosphotyrosine" evidence="8 9">
    <location>
        <position position="56"/>
    </location>
</feature>
<feature type="sequence variant" id="VAR_087550" description="In AIPDSB; decreased function in protein linear deubiquitination." evidence="17">
    <original>M</original>
    <variation>I</variation>
    <location>
        <position position="86"/>
    </location>
</feature>
<feature type="sequence variant" id="VAR_087551" description="In IMD107; loss of NF-kappa-B inhibition and increased NF-kappa-B signaling." evidence="18">
    <location>
        <begin position="95"/>
        <end position="352"/>
    </location>
</feature>
<feature type="sequence variant" id="VAR_087552" description="Does not affect down-regulation of NF-kappa-B signaling; dbSNP:rs147790160." evidence="18">
    <original>Q</original>
    <variation>H</variation>
    <location>
        <position position="115"/>
    </location>
</feature>
<feature type="sequence variant" id="VAR_090240" description="In AIPDSA; pathogenic; abolishes deubiquitinase activity." evidence="19">
    <original>C</original>
    <variation>S</variation>
    <location>
        <position position="129"/>
    </location>
</feature>
<feature type="sequence variant" id="VAR_090241" description="In AIPDSA; likely benign; not changed protein stability; no effect on deubiquitinase activity; dbSNP:rs547080675." evidence="20">
    <original>P</original>
    <variation>L</variation>
    <location>
        <position position="152"/>
    </location>
</feature>
<feature type="sequence variant" id="VAR_053819" description="In dbSNP:rs11953822.">
    <original>M</original>
    <variation>L</variation>
    <location>
        <position position="155"/>
    </location>
</feature>
<feature type="sequence variant" id="VAR_087553" description="In AIPDSB; decreased function in protein linear deubiquitination." evidence="17">
    <original>W</original>
    <variation>S</variation>
    <location>
        <position position="167"/>
    </location>
</feature>
<feature type="sequence variant" id="VAR_029469" description="In dbSNP:rs1736487436.">
    <original>S</original>
    <variation>N</variation>
    <location>
        <position position="227"/>
    </location>
</feature>
<feature type="sequence variant" id="VAR_076865" description="In AIPDSB and IMD107; slightly impaired ability to mediate deubiquitination of linear polyubiquitin chains; does not affect ability to interact with RNF31; severely decreased NF-kappa-B inhibition and increased NF-kappa-B signaling; dbSNP:rs886037887." evidence="14 18">
    <original>Y</original>
    <variation>C</variation>
    <location>
        <position position="244"/>
    </location>
</feature>
<feature type="sequence variant" id="VAR_087554" description="In IMD107; severely decreased NF-kappa-B inhibition and increased NF-kappa-B signaling." evidence="18">
    <original>D</original>
    <variation>V</variation>
    <location>
        <position position="246"/>
    </location>
</feature>
<feature type="sequence variant" id="VAR_087555" description="In IMD107; loss of NF-kappa-B inhibition and increased NF-kappa-B signaling; dbSNP:rs1332823115." evidence="18">
    <original>R</original>
    <variation>Q</variation>
    <location>
        <position position="263"/>
    </location>
</feature>
<feature type="sequence variant" id="VAR_076866" description="In AIPDSB and IMD107; decreased stability; impaired ability to mediate deubiquitination of linear polyubiquitin chains; loss of NF-kappa-B inhibition and increased NF-kappa-B signaling; does not affect ability to interact with RNF31; dbSNP:rs886037885." evidence="13 14 18">
    <original>L</original>
    <variation>P</variation>
    <location>
        <position position="272"/>
    </location>
</feature>
<feature type="sequence variant" id="VAR_090242" description="In AIPDSB; likely pathogenic; affects protein structure and partly unfolds the substrate binding site; decreased thermal stability; decreased deubiquitinase activity." evidence="16 18">
    <original>G</original>
    <variation>R</variation>
    <location>
        <position position="281"/>
    </location>
</feature>
<feature type="sequence variant" id="VAR_090243" description="In AIPDSA; pathogenic; severely decreased deubiquitinase activity; dbSNP:rs1736567973." evidence="20">
    <original>R</original>
    <variation>Q</variation>
    <location>
        <position position="306"/>
    </location>
</feature>
<feature type="sequence variant" id="VAR_053820" description="In dbSNP:rs9312870.">
    <original>N</original>
    <variation>S</variation>
    <location>
        <position position="311"/>
    </location>
</feature>
<feature type="mutagenesis site" description="Reduced interaction with RNF31." evidence="8">
    <original>D</original>
    <variation>A</variation>
    <location>
        <position position="54"/>
    </location>
</feature>
<feature type="mutagenesis site" description="Abolished interaction with RNF31." evidence="8">
    <original>M</original>
    <variation>D</variation>
    <location>
        <position position="55"/>
    </location>
</feature>
<feature type="mutagenesis site" description="Abolished interaction with RNF31." evidence="8 9 12">
    <original>Y</original>
    <variation>A</variation>
    <variation>D</variation>
    <location>
        <position position="56"/>
    </location>
</feature>
<feature type="mutagenesis site" description="Strongly reduced interaction with RNF31." evidence="8 9">
    <original>Y</original>
    <variation>E</variation>
    <variation>F</variation>
    <variation>W</variation>
    <location>
        <position position="56"/>
    </location>
</feature>
<feature type="mutagenesis site" description="Results in strong reduction of kcat while not affecting KM." evidence="5">
    <original>Y</original>
    <variation>F</variation>
    <location>
        <position position="91"/>
    </location>
</feature>
<feature type="mutagenesis site" description="Decreased activity toward linear ubiquitin." evidence="5 6">
    <original>W</original>
    <variation>A</variation>
    <location>
        <position position="96"/>
    </location>
</feature>
<feature type="mutagenesis site" description="Decreased activity toward linear ubiquitin." evidence="5">
    <original>TQK</original>
    <variation>AAA</variation>
    <location>
        <begin position="100"/>
        <end position="102"/>
    </location>
</feature>
<feature type="mutagenesis site" description="Abolishes deubiquitinase activity." evidence="4 5 6 9 15">
    <original>C</original>
    <variation>A</variation>
    <location>
        <position position="129"/>
    </location>
</feature>
<feature type="mutagenesis site" description="Severely decreased NF-kappa-B inhibition and increased NF-kappa-B signaling." evidence="18">
    <original>P</original>
    <variation>S</variation>
    <location>
        <position position="254"/>
    </location>
</feature>
<feature type="mutagenesis site" description="Decreased affinity for linear diubiquitin." evidence="5">
    <original>L</original>
    <variation>E</variation>
    <location>
        <position position="259"/>
    </location>
</feature>
<feature type="mutagenesis site" description="Decreased affinity for linear diubiquitin." evidence="5">
    <original>E</original>
    <variation>R</variation>
    <location>
        <position position="314"/>
    </location>
</feature>
<feature type="mutagenesis site" description="Stabilizes H-339 in the active conformation, generating a more reactive enzyme." evidence="5">
    <original>D</original>
    <variation>A</variation>
    <location>
        <position position="336"/>
    </location>
</feature>
<feature type="mutagenesis site" description="Impaired deubiquitinase activity." evidence="5">
    <original>H</original>
    <variation>A</variation>
    <location>
        <position position="339"/>
    </location>
</feature>
<feature type="mutagenesis site" description="Abolishes deubiquitinase activity." evidence="5">
    <original>N</original>
    <variation>A</variation>
    <location>
        <position position="341"/>
    </location>
</feature>
<feature type="mutagenesis site" description="Stabilizes H-339 in the active conformation, generating a more reactive enzyme. Severely decreased NF-kappa-B inhibition and increased NF-kappa-B signaling." evidence="5 18">
    <original>N</original>
    <variation>D</variation>
    <location>
        <position position="341"/>
    </location>
</feature>
<feature type="sequence conflict" description="In Ref. 4; BAC03828." evidence="22" ref="4">
    <original>R</original>
    <variation>G</variation>
    <location>
        <position position="211"/>
    </location>
</feature>
<feature type="strand" evidence="32">
    <location>
        <begin position="55"/>
        <end position="57"/>
    </location>
</feature>
<feature type="helix" evidence="32">
    <location>
        <begin position="59"/>
        <end position="63"/>
    </location>
</feature>
<feature type="helix" evidence="29">
    <location>
        <begin position="88"/>
        <end position="95"/>
    </location>
</feature>
<feature type="helix" evidence="29">
    <location>
        <begin position="101"/>
        <end position="114"/>
    </location>
</feature>
<feature type="strand" evidence="29">
    <location>
        <begin position="118"/>
        <end position="121"/>
    </location>
</feature>
<feature type="helix" evidence="29">
    <location>
        <begin position="129"/>
        <end position="140"/>
    </location>
</feature>
<feature type="helix" evidence="29">
    <location>
        <begin position="147"/>
        <end position="150"/>
    </location>
</feature>
<feature type="helix" evidence="29">
    <location>
        <begin position="153"/>
        <end position="164"/>
    </location>
</feature>
<feature type="helix" evidence="29">
    <location>
        <begin position="166"/>
        <end position="170"/>
    </location>
</feature>
<feature type="helix" evidence="33">
    <location>
        <begin position="181"/>
        <end position="183"/>
    </location>
</feature>
<feature type="helix" evidence="29">
    <location>
        <begin position="184"/>
        <end position="204"/>
    </location>
</feature>
<feature type="helix" evidence="29">
    <location>
        <begin position="208"/>
        <end position="218"/>
    </location>
</feature>
<feature type="strand" evidence="29">
    <location>
        <begin position="220"/>
        <end position="222"/>
    </location>
</feature>
<feature type="helix" evidence="29">
    <location>
        <begin position="223"/>
        <end position="248"/>
    </location>
</feature>
<feature type="helix" evidence="29">
    <location>
        <begin position="255"/>
        <end position="262"/>
    </location>
</feature>
<feature type="strand" evidence="31">
    <location>
        <begin position="263"/>
        <end position="265"/>
    </location>
</feature>
<feature type="helix" evidence="29">
    <location>
        <begin position="269"/>
        <end position="275"/>
    </location>
</feature>
<feature type="helix" evidence="29">
    <location>
        <begin position="277"/>
        <end position="279"/>
    </location>
</feature>
<feature type="turn" evidence="29">
    <location>
        <begin position="280"/>
        <end position="282"/>
    </location>
</feature>
<feature type="helix" evidence="29">
    <location>
        <begin position="288"/>
        <end position="298"/>
    </location>
</feature>
<feature type="strand" evidence="29">
    <location>
        <begin position="301"/>
        <end position="306"/>
    </location>
</feature>
<feature type="helix" evidence="29">
    <location>
        <begin position="307"/>
        <end position="309"/>
    </location>
</feature>
<feature type="helix" evidence="29">
    <location>
        <begin position="313"/>
        <end position="315"/>
    </location>
</feature>
<feature type="strand" evidence="29">
    <location>
        <begin position="316"/>
        <end position="322"/>
    </location>
</feature>
<feature type="strand" evidence="29">
    <location>
        <begin position="329"/>
        <end position="336"/>
    </location>
</feature>
<feature type="strand" evidence="29">
    <location>
        <begin position="339"/>
        <end position="344"/>
    </location>
</feature>
<feature type="helix" evidence="30">
    <location>
        <begin position="346"/>
        <end position="348"/>
    </location>
</feature>
<gene>
    <name evidence="21 23" type="primary">OTULIN</name>
    <name evidence="23" type="synonym">FAM105B</name>
</gene>